<proteinExistence type="evidence at protein level"/>
<name>UNC17_CAEEL</name>
<feature type="chain" id="PRO_0000127525" description="Vesicular acetylcholine transporter unc-17">
    <location>
        <begin position="1"/>
        <end position="532"/>
    </location>
</feature>
<feature type="topological domain" description="Cytoplasmic" evidence="1">
    <location>
        <begin position="1"/>
        <end position="31"/>
    </location>
</feature>
<feature type="transmembrane region" description="Helical" evidence="1">
    <location>
        <begin position="32"/>
        <end position="52"/>
    </location>
</feature>
<feature type="topological domain" description="Lumenal, vesicle" evidence="1">
    <location>
        <begin position="53"/>
        <end position="101"/>
    </location>
</feature>
<feature type="transmembrane region" description="Helical" evidence="1">
    <location>
        <begin position="102"/>
        <end position="121"/>
    </location>
</feature>
<feature type="topological domain" description="Cytoplasmic" evidence="1">
    <location>
        <begin position="122"/>
        <end position="130"/>
    </location>
</feature>
<feature type="transmembrane region" description="Helical" evidence="1">
    <location>
        <begin position="131"/>
        <end position="151"/>
    </location>
</feature>
<feature type="topological domain" description="Lumenal, vesicle" evidence="1">
    <location>
        <begin position="152"/>
        <end position="160"/>
    </location>
</feature>
<feature type="transmembrane region" description="Helical" evidence="1">
    <location>
        <begin position="161"/>
        <end position="180"/>
    </location>
</feature>
<feature type="topological domain" description="Cytoplasmic" evidence="1">
    <location>
        <begin position="181"/>
        <end position="191"/>
    </location>
</feature>
<feature type="transmembrane region" description="Helical" evidence="1">
    <location>
        <begin position="192"/>
        <end position="213"/>
    </location>
</feature>
<feature type="topological domain" description="Lumenal, vesicle" evidence="1">
    <location>
        <begin position="214"/>
        <end position="219"/>
    </location>
</feature>
<feature type="transmembrane region" description="Helical" evidence="1">
    <location>
        <begin position="220"/>
        <end position="242"/>
    </location>
</feature>
<feature type="topological domain" description="Cytoplasmic" evidence="1">
    <location>
        <begin position="243"/>
        <end position="266"/>
    </location>
</feature>
<feature type="transmembrane region" description="Helical" evidence="1">
    <location>
        <begin position="267"/>
        <end position="286"/>
    </location>
</feature>
<feature type="topological domain" description="Lumenal, vesicle" evidence="1">
    <location>
        <begin position="287"/>
        <end position="303"/>
    </location>
</feature>
<feature type="transmembrane region" description="Helical" evidence="1">
    <location>
        <begin position="304"/>
        <end position="328"/>
    </location>
</feature>
<feature type="topological domain" description="Cytoplasmic" evidence="1">
    <location>
        <begin position="329"/>
        <end position="335"/>
    </location>
</feature>
<feature type="transmembrane region" description="Helical" evidence="1">
    <location>
        <begin position="336"/>
        <end position="356"/>
    </location>
</feature>
<feature type="topological domain" description="Lumenal, vesicle" evidence="1">
    <location>
        <begin position="357"/>
        <end position="367"/>
    </location>
</feature>
<feature type="transmembrane region" description="Helical" evidence="1">
    <location>
        <begin position="368"/>
        <end position="388"/>
    </location>
</feature>
<feature type="topological domain" description="Cytoplasmic" evidence="1">
    <location>
        <begin position="389"/>
        <end position="393"/>
    </location>
</feature>
<feature type="transmembrane region" description="Helical" evidence="1">
    <location>
        <begin position="394"/>
        <end position="412"/>
    </location>
</feature>
<feature type="topological domain" description="Lumenal, vesicle" evidence="1">
    <location>
        <begin position="413"/>
        <end position="418"/>
    </location>
</feature>
<feature type="transmembrane region" description="Helical" evidence="1">
    <location>
        <begin position="419"/>
        <end position="440"/>
    </location>
</feature>
<feature type="topological domain" description="Cytoplasmic" evidence="1">
    <location>
        <begin position="441"/>
        <end position="532"/>
    </location>
</feature>
<feature type="glycosylation site" description="N-linked (GlcNAc...) asparagine" evidence="1">
    <location>
        <position position="74"/>
    </location>
</feature>
<feature type="glycosylation site" description="N-linked (GlcNAc...) asparagine" evidence="1">
    <location>
        <position position="81"/>
    </location>
</feature>
<feature type="mutagenesis site" description="In p1160; severely uncoordinated." evidence="3">
    <original>C</original>
    <variation>F</variation>
    <location>
        <position position="230"/>
    </location>
</feature>
<feature type="mutagenesis site" description="In e245; severely uncoordinated." evidence="3">
    <original>G</original>
    <variation>A</variation>
    <location>
        <position position="347"/>
    </location>
</feature>
<protein>
    <recommendedName>
        <fullName>Vesicular acetylcholine transporter unc-17</fullName>
    </recommendedName>
    <alternativeName>
        <fullName>Uncoordinated protein 17</fullName>
    </alternativeName>
</protein>
<reference key="1">
    <citation type="journal article" date="1993" name="Science">
        <title>The Caenorhabditis elegans unc-17 gene: a putative vesicular acetylcholine transporter.</title>
        <authorList>
            <person name="Alfonso A."/>
            <person name="Grundahl K."/>
            <person name="Duerr J.S."/>
            <person name="Han H.-P."/>
            <person name="Rand J.B."/>
        </authorList>
    </citation>
    <scope>NUCLEOTIDE SEQUENCE [MRNA]</scope>
    <scope>FUNCTION</scope>
    <scope>SUBCELLULAR LOCATION</scope>
    <scope>TISSUE SPECIFICITY</scope>
    <scope>DISRUPTION PHENOTYPE</scope>
    <scope>MUTAGENESIS OF CYS-230 AND GLY-347</scope>
    <source>
        <strain>Bristol N2</strain>
    </source>
</reference>
<reference key="2">
    <citation type="journal article" date="1994" name="J. Mol. Biol.">
        <title>Alternative splicing leads to two cholinergic proteins in Caenorhabditis elegans.</title>
        <authorList>
            <person name="Alfonso A."/>
            <person name="Grundahl K."/>
            <person name="McManus J.R."/>
            <person name="Asbury J.M."/>
            <person name="Rand J.B."/>
        </authorList>
    </citation>
    <scope>NUCLEOTIDE SEQUENCE [GENOMIC DNA]</scope>
    <source>
        <strain>Bristol N2</strain>
    </source>
</reference>
<reference key="3">
    <citation type="journal article" date="1998" name="Science">
        <title>Genome sequence of the nematode C. elegans: a platform for investigating biology.</title>
        <authorList>
            <consortium name="The C. elegans sequencing consortium"/>
        </authorList>
    </citation>
    <scope>NUCLEOTIDE SEQUENCE [LARGE SCALE GENOMIC DNA]</scope>
    <source>
        <strain>Bristol N2</strain>
    </source>
</reference>
<reference key="4">
    <citation type="journal article" date="2017" name="Elife">
        <title>Analysis of the NK2 homeobox gene ceh-24 reveals sublateral motor neuron control of left-right turning during sleep.</title>
        <authorList>
            <person name="Schwarz J."/>
            <person name="Bringmann H."/>
        </authorList>
    </citation>
    <scope>TISSUE SPECIFICITY</scope>
</reference>
<comment type="function">
    <text evidence="3">Involved in acetylcholine transport into synaptic vesicles.</text>
</comment>
<comment type="subcellular location">
    <subcellularLocation>
        <location evidence="3">Cytoplasmic vesicle</location>
        <location evidence="3">Secretory vesicle</location>
        <location evidence="3">Synaptic vesicle membrane</location>
        <topology evidence="3">Multi-pass membrane protein</topology>
    </subcellularLocation>
</comment>
<comment type="tissue specificity">
    <text evidence="2 3">Detected in most regions of the nervous system including the nerve ring, the ventral and dorsal nerve cords, and the pharyngeal nervous system (PubMed:8342028). Expressed in most cholinergic neurons (PubMed:28244369, PubMed:8342028). In addition, expressed in SIA, SIB and SMB sublateral motor neurons (PubMed:28244369).</text>
</comment>
<comment type="disruption phenotype">
    <text evidence="3">Newly hatched animals are small and coiled, do not grow or feed, can barely move and die within a few days.</text>
</comment>
<comment type="similarity">
    <text evidence="4">Belongs to the major facilitator superfamily. Vesicular transporter family.</text>
</comment>
<dbReference type="EMBL" id="L19621">
    <property type="protein sequence ID" value="AAC14456.1"/>
    <property type="molecule type" value="mRNA"/>
</dbReference>
<dbReference type="EMBL" id="U09277">
    <property type="protein sequence ID" value="AAC13764.1"/>
    <property type="molecule type" value="Genomic_DNA"/>
</dbReference>
<dbReference type="EMBL" id="FO080977">
    <property type="protein sequence ID" value="CCD68241.1"/>
    <property type="molecule type" value="Genomic_DNA"/>
</dbReference>
<dbReference type="PIR" id="S53603">
    <property type="entry name" value="S53603"/>
</dbReference>
<dbReference type="RefSeq" id="NP_001023602.1">
    <property type="nucleotide sequence ID" value="NM_001028431.3"/>
</dbReference>
<dbReference type="RefSeq" id="NP_001379838.1">
    <property type="nucleotide sequence ID" value="NM_001392284.1"/>
</dbReference>
<dbReference type="SMR" id="P34711"/>
<dbReference type="BioGRID" id="2550363">
    <property type="interactions" value="1"/>
</dbReference>
<dbReference type="FunCoup" id="P34711">
    <property type="interactions" value="33"/>
</dbReference>
<dbReference type="IntAct" id="P34711">
    <property type="interactions" value="1"/>
</dbReference>
<dbReference type="MINT" id="P34711"/>
<dbReference type="STRING" id="6239.ZC416.8a.1"/>
<dbReference type="TCDB" id="2.A.1.2.13">
    <property type="family name" value="the major facilitator superfamily (mfs)"/>
</dbReference>
<dbReference type="GlyCosmos" id="P34711">
    <property type="glycosylation" value="2 sites, No reported glycans"/>
</dbReference>
<dbReference type="PaxDb" id="6239-ZC416.8a"/>
<dbReference type="PeptideAtlas" id="P34711"/>
<dbReference type="EnsemblMetazoa" id="ZC416.8a.1">
    <property type="protein sequence ID" value="ZC416.8a.1"/>
    <property type="gene ID" value="WBGene00006756"/>
</dbReference>
<dbReference type="GeneID" id="24105312"/>
<dbReference type="AGR" id="WB:WBGene00006756"/>
<dbReference type="WormBase" id="ZC416.8a">
    <property type="protein sequence ID" value="CE17307"/>
    <property type="gene ID" value="WBGene00006756"/>
    <property type="gene designation" value="unc-17"/>
</dbReference>
<dbReference type="eggNOG" id="KOG3764">
    <property type="taxonomic scope" value="Eukaryota"/>
</dbReference>
<dbReference type="GeneTree" id="ENSGT00940000159449"/>
<dbReference type="HOGENOM" id="CLU_001265_10_9_1"/>
<dbReference type="InParanoid" id="P34711"/>
<dbReference type="OMA" id="REYWVSV"/>
<dbReference type="OrthoDB" id="5086884at2759"/>
<dbReference type="PhylomeDB" id="P34711"/>
<dbReference type="Reactome" id="R-CEL-264642">
    <property type="pathway name" value="Acetylcholine Neurotransmitter Release Cycle"/>
</dbReference>
<dbReference type="Reactome" id="R-CEL-8856825">
    <property type="pathway name" value="Cargo recognition for clathrin-mediated endocytosis"/>
</dbReference>
<dbReference type="Reactome" id="R-CEL-8856828">
    <property type="pathway name" value="Clathrin-mediated endocytosis"/>
</dbReference>
<dbReference type="PRO" id="PR:P34711"/>
<dbReference type="Proteomes" id="UP000001940">
    <property type="component" value="Chromosome IV"/>
</dbReference>
<dbReference type="Bgee" id="WBGene00006756">
    <property type="expression patterns" value="Expressed in larva and 3 other cell types or tissues"/>
</dbReference>
<dbReference type="GO" id="GO:0030121">
    <property type="term" value="C:AP-1 adaptor complex"/>
    <property type="evidence" value="ECO:0000318"/>
    <property type="project" value="GO_Central"/>
</dbReference>
<dbReference type="GO" id="GO:0030122">
    <property type="term" value="C:AP-2 adaptor complex"/>
    <property type="evidence" value="ECO:0000318"/>
    <property type="project" value="GO_Central"/>
</dbReference>
<dbReference type="GO" id="GO:0060076">
    <property type="term" value="C:excitatory synapse"/>
    <property type="evidence" value="ECO:0000314"/>
    <property type="project" value="WormBase"/>
</dbReference>
<dbReference type="GO" id="GO:0043005">
    <property type="term" value="C:neuron projection"/>
    <property type="evidence" value="ECO:0000314"/>
    <property type="project" value="WormBase"/>
</dbReference>
<dbReference type="GO" id="GO:0031090">
    <property type="term" value="C:organelle membrane"/>
    <property type="evidence" value="ECO:0000314"/>
    <property type="project" value="WormBase"/>
</dbReference>
<dbReference type="GO" id="GO:0005886">
    <property type="term" value="C:plasma membrane"/>
    <property type="evidence" value="ECO:0000303"/>
    <property type="project" value="UniProtKB"/>
</dbReference>
<dbReference type="GO" id="GO:0045202">
    <property type="term" value="C:synapse"/>
    <property type="evidence" value="ECO:0000314"/>
    <property type="project" value="WormBase"/>
</dbReference>
<dbReference type="GO" id="GO:0008021">
    <property type="term" value="C:synaptic vesicle"/>
    <property type="evidence" value="ECO:0000314"/>
    <property type="project" value="WormBase"/>
</dbReference>
<dbReference type="GO" id="GO:0030672">
    <property type="term" value="C:synaptic vesicle membrane"/>
    <property type="evidence" value="ECO:0000303"/>
    <property type="project" value="WormBase"/>
</dbReference>
<dbReference type="GO" id="GO:0043195">
    <property type="term" value="C:terminal bouton"/>
    <property type="evidence" value="ECO:0000318"/>
    <property type="project" value="GO_Central"/>
</dbReference>
<dbReference type="GO" id="GO:0005277">
    <property type="term" value="F:acetylcholine transmembrane transporter activity"/>
    <property type="evidence" value="ECO:0000315"/>
    <property type="project" value="UniProtKB"/>
</dbReference>
<dbReference type="GO" id="GO:0042910">
    <property type="term" value="F:xenobiotic transmembrane transporter activity"/>
    <property type="evidence" value="ECO:0007669"/>
    <property type="project" value="InterPro"/>
</dbReference>
<dbReference type="GO" id="GO:0015870">
    <property type="term" value="P:acetylcholine transport"/>
    <property type="evidence" value="ECO:0000250"/>
    <property type="project" value="WormBase"/>
</dbReference>
<dbReference type="GO" id="GO:0007268">
    <property type="term" value="P:chemical synaptic transmission"/>
    <property type="evidence" value="ECO:0000318"/>
    <property type="project" value="GO_Central"/>
</dbReference>
<dbReference type="GO" id="GO:0002119">
    <property type="term" value="P:nematode larval development"/>
    <property type="evidence" value="ECO:0000315"/>
    <property type="project" value="WormBase"/>
</dbReference>
<dbReference type="GO" id="GO:0040012">
    <property type="term" value="P:regulation of locomotion"/>
    <property type="evidence" value="ECO:0000315"/>
    <property type="project" value="WormBase"/>
</dbReference>
<dbReference type="GO" id="GO:0006937">
    <property type="term" value="P:regulation of muscle contraction"/>
    <property type="evidence" value="ECO:0000315"/>
    <property type="project" value="UniProtKB"/>
</dbReference>
<dbReference type="GO" id="GO:0043051">
    <property type="term" value="P:regulation of nematode pharyngeal pumping"/>
    <property type="evidence" value="ECO:0000315"/>
    <property type="project" value="WormBase"/>
</dbReference>
<dbReference type="GO" id="GO:0046928">
    <property type="term" value="P:regulation of neurotransmitter secretion"/>
    <property type="evidence" value="ECO:0000315"/>
    <property type="project" value="WormBase"/>
</dbReference>
<dbReference type="GO" id="GO:0007271">
    <property type="term" value="P:synaptic transmission, cholinergic"/>
    <property type="evidence" value="ECO:0000315"/>
    <property type="project" value="WormBase"/>
</dbReference>
<dbReference type="CDD" id="cd17383">
    <property type="entry name" value="MFS_SLC18A3_VAChT"/>
    <property type="match status" value="1"/>
</dbReference>
<dbReference type="Gene3D" id="1.20.1250.20">
    <property type="entry name" value="MFS general substrate transporter like domains"/>
    <property type="match status" value="1"/>
</dbReference>
<dbReference type="InterPro" id="IPR011701">
    <property type="entry name" value="MFS"/>
</dbReference>
<dbReference type="InterPro" id="IPR020846">
    <property type="entry name" value="MFS_dom"/>
</dbReference>
<dbReference type="InterPro" id="IPR036259">
    <property type="entry name" value="MFS_trans_sf"/>
</dbReference>
<dbReference type="InterPro" id="IPR050930">
    <property type="entry name" value="MFS_Vesicular_Transporter"/>
</dbReference>
<dbReference type="InterPro" id="IPR004734">
    <property type="entry name" value="Multidrug-R"/>
</dbReference>
<dbReference type="NCBIfam" id="TIGR00880">
    <property type="entry name" value="2_A_01_02"/>
    <property type="match status" value="1"/>
</dbReference>
<dbReference type="PANTHER" id="PTHR23506">
    <property type="entry name" value="GH10249P"/>
    <property type="match status" value="1"/>
</dbReference>
<dbReference type="PANTHER" id="PTHR23506:SF13">
    <property type="entry name" value="VESICULAR ACETYLCHOLINE TRANSPORTER"/>
    <property type="match status" value="1"/>
</dbReference>
<dbReference type="Pfam" id="PF07690">
    <property type="entry name" value="MFS_1"/>
    <property type="match status" value="1"/>
</dbReference>
<dbReference type="SUPFAM" id="SSF103473">
    <property type="entry name" value="MFS general substrate transporter"/>
    <property type="match status" value="1"/>
</dbReference>
<dbReference type="PROSITE" id="PS50850">
    <property type="entry name" value="MFS"/>
    <property type="match status" value="1"/>
</dbReference>
<keyword id="KW-0968">Cytoplasmic vesicle</keyword>
<keyword id="KW-0325">Glycoprotein</keyword>
<keyword id="KW-0472">Membrane</keyword>
<keyword id="KW-0532">Neurotransmitter transport</keyword>
<keyword id="KW-1185">Reference proteome</keyword>
<keyword id="KW-0770">Synapse</keyword>
<keyword id="KW-0812">Transmembrane</keyword>
<keyword id="KW-1133">Transmembrane helix</keyword>
<keyword id="KW-0813">Transport</keyword>
<evidence type="ECO:0000255" key="1"/>
<evidence type="ECO:0000269" key="2">
    <source>
    </source>
</evidence>
<evidence type="ECO:0000269" key="3">
    <source>
    </source>
</evidence>
<evidence type="ECO:0000305" key="4"/>
<evidence type="ECO:0000312" key="5">
    <source>
        <dbReference type="WormBase" id="ZC416.8a"/>
    </source>
</evidence>
<accession>P34711</accession>
<gene>
    <name evidence="5" type="primary">unc-17</name>
    <name evidence="5" type="ORF">ZC416.8</name>
</gene>
<sequence length="532" mass="58643">MGFNVPVINRDSEILKADAKKWLEQQDNQKKCVLVIVSIALLLDNMLYMVIVPIIPKYLRDIHNYQVTFEGYHNETSQLANGTYLVREVGGRINFLDEELELGWLFASKALLQIFVNPFSGYIIDRVGYEIPMILGLCTMFFSTAIFALGKSYGVLLFARSLQGFGSAFADTSGLAMIADRFTEENERSAALGIALAFISFGCLVAPPFGSVLYSLAGKPVPFLILSFVCLADAIAVFMVINPHRRGTDSHGEKVQGTPMWRLFMDPFIACCSGALIMANVSLAFLEPTITTWMSEMMPDTPGWLVGVIWLPPFFPHVLGVYVTVKMLRAFPHHTWAIAMVGLAMEGIACFAIPYTTSVMQLVIPLSFVCFGIALIDTSLLPMLGHLVDTRHVSVYGSVYAIADISYSLAYAFGPIIAGWIVTNWGFTALNIIIFATNVTYAPVLFLLRKVHSYDTLGAKGDTAEMTQLNSSAPAGGYNGKPEATTAESYQGWEDQQSYQNQAQIPNHAVSFQDSRPQAEFPAGYDPLNPQW</sequence>
<organism>
    <name type="scientific">Caenorhabditis elegans</name>
    <dbReference type="NCBI Taxonomy" id="6239"/>
    <lineage>
        <taxon>Eukaryota</taxon>
        <taxon>Metazoa</taxon>
        <taxon>Ecdysozoa</taxon>
        <taxon>Nematoda</taxon>
        <taxon>Chromadorea</taxon>
        <taxon>Rhabditida</taxon>
        <taxon>Rhabditina</taxon>
        <taxon>Rhabditomorpha</taxon>
        <taxon>Rhabditoidea</taxon>
        <taxon>Rhabditidae</taxon>
        <taxon>Peloderinae</taxon>
        <taxon>Caenorhabditis</taxon>
    </lineage>
</organism>